<evidence type="ECO:0000255" key="1">
    <source>
        <dbReference type="HAMAP-Rule" id="MF_01007"/>
    </source>
</evidence>
<sequence>MSQEFAHLSVLLAETVGGLNIKDDGIYIDGTFGRGGHSRQVLQQLGENGRLIAIDRDPQAIEAAKQFADDPRFQIVHGGFGQLADYVEELGLVGKIDGVLLDLGVSSPQLDDAERGFSFMRDGPLDMRMDNSQGQTAAQWLARAEIEDMAWVFKTYGEEKNARHIARCIAADRDKTPFLRTKDLADLIARITKSKERNKHPATRVFQAIRIYINSELDQIDQALEGAVNVLAPQGRLSVISFHSLEDRIVKRFIRRHSQGESVPHGFPVTEDQINKSRKLRAVGKAIMPSDEEIERNARARSSVLRIAERLDY</sequence>
<keyword id="KW-0963">Cytoplasm</keyword>
<keyword id="KW-0489">Methyltransferase</keyword>
<keyword id="KW-0698">rRNA processing</keyword>
<keyword id="KW-0949">S-adenosyl-L-methionine</keyword>
<keyword id="KW-0808">Transferase</keyword>
<protein>
    <recommendedName>
        <fullName evidence="1">Ribosomal RNA small subunit methyltransferase H</fullName>
        <ecNumber evidence="1">2.1.1.199</ecNumber>
    </recommendedName>
    <alternativeName>
        <fullName evidence="1">16S rRNA m(4)C1402 methyltransferase</fullName>
    </alternativeName>
    <alternativeName>
        <fullName evidence="1">rRNA (cytosine-N(4)-)-methyltransferase RsmH</fullName>
    </alternativeName>
</protein>
<name>RSMH_SHEB2</name>
<reference key="1">
    <citation type="submission" date="2008-12" db="EMBL/GenBank/DDBJ databases">
        <title>Complete sequence of chromosome of Shewanella baltica OS223.</title>
        <authorList>
            <consortium name="US DOE Joint Genome Institute"/>
            <person name="Lucas S."/>
            <person name="Copeland A."/>
            <person name="Lapidus A."/>
            <person name="Glavina del Rio T."/>
            <person name="Dalin E."/>
            <person name="Tice H."/>
            <person name="Bruce D."/>
            <person name="Goodwin L."/>
            <person name="Pitluck S."/>
            <person name="Chertkov O."/>
            <person name="Meincke L."/>
            <person name="Brettin T."/>
            <person name="Detter J.C."/>
            <person name="Han C."/>
            <person name="Kuske C.R."/>
            <person name="Larimer F."/>
            <person name="Land M."/>
            <person name="Hauser L."/>
            <person name="Kyrpides N."/>
            <person name="Ovchinnikova G."/>
            <person name="Brettar I."/>
            <person name="Rodrigues J."/>
            <person name="Konstantinidis K."/>
            <person name="Tiedje J."/>
        </authorList>
    </citation>
    <scope>NUCLEOTIDE SEQUENCE [LARGE SCALE GENOMIC DNA]</scope>
    <source>
        <strain>OS223</strain>
    </source>
</reference>
<organism>
    <name type="scientific">Shewanella baltica (strain OS223)</name>
    <dbReference type="NCBI Taxonomy" id="407976"/>
    <lineage>
        <taxon>Bacteria</taxon>
        <taxon>Pseudomonadati</taxon>
        <taxon>Pseudomonadota</taxon>
        <taxon>Gammaproteobacteria</taxon>
        <taxon>Alteromonadales</taxon>
        <taxon>Shewanellaceae</taxon>
        <taxon>Shewanella</taxon>
    </lineage>
</organism>
<gene>
    <name evidence="1" type="primary">rsmH</name>
    <name type="synonym">mraW</name>
    <name type="ordered locus">Sbal223_0419</name>
</gene>
<feature type="chain" id="PRO_0000387113" description="Ribosomal RNA small subunit methyltransferase H">
    <location>
        <begin position="1"/>
        <end position="313"/>
    </location>
</feature>
<feature type="binding site" evidence="1">
    <location>
        <begin position="35"/>
        <end position="37"/>
    </location>
    <ligand>
        <name>S-adenosyl-L-methionine</name>
        <dbReference type="ChEBI" id="CHEBI:59789"/>
    </ligand>
</feature>
<feature type="binding site" evidence="1">
    <location>
        <position position="55"/>
    </location>
    <ligand>
        <name>S-adenosyl-L-methionine</name>
        <dbReference type="ChEBI" id="CHEBI:59789"/>
    </ligand>
</feature>
<feature type="binding site" evidence="1">
    <location>
        <position position="80"/>
    </location>
    <ligand>
        <name>S-adenosyl-L-methionine</name>
        <dbReference type="ChEBI" id="CHEBI:59789"/>
    </ligand>
</feature>
<feature type="binding site" evidence="1">
    <location>
        <position position="102"/>
    </location>
    <ligand>
        <name>S-adenosyl-L-methionine</name>
        <dbReference type="ChEBI" id="CHEBI:59789"/>
    </ligand>
</feature>
<feature type="binding site" evidence="1">
    <location>
        <position position="109"/>
    </location>
    <ligand>
        <name>S-adenosyl-L-methionine</name>
        <dbReference type="ChEBI" id="CHEBI:59789"/>
    </ligand>
</feature>
<accession>B8E4L2</accession>
<comment type="function">
    <text evidence="1">Specifically methylates the N4 position of cytidine in position 1402 (C1402) of 16S rRNA.</text>
</comment>
<comment type="catalytic activity">
    <reaction evidence="1">
        <text>cytidine(1402) in 16S rRNA + S-adenosyl-L-methionine = N(4)-methylcytidine(1402) in 16S rRNA + S-adenosyl-L-homocysteine + H(+)</text>
        <dbReference type="Rhea" id="RHEA:42928"/>
        <dbReference type="Rhea" id="RHEA-COMP:10286"/>
        <dbReference type="Rhea" id="RHEA-COMP:10287"/>
        <dbReference type="ChEBI" id="CHEBI:15378"/>
        <dbReference type="ChEBI" id="CHEBI:57856"/>
        <dbReference type="ChEBI" id="CHEBI:59789"/>
        <dbReference type="ChEBI" id="CHEBI:74506"/>
        <dbReference type="ChEBI" id="CHEBI:82748"/>
        <dbReference type="EC" id="2.1.1.199"/>
    </reaction>
</comment>
<comment type="subcellular location">
    <subcellularLocation>
        <location evidence="1">Cytoplasm</location>
    </subcellularLocation>
</comment>
<comment type="similarity">
    <text evidence="1">Belongs to the methyltransferase superfamily. RsmH family.</text>
</comment>
<proteinExistence type="inferred from homology"/>
<dbReference type="EC" id="2.1.1.199" evidence="1"/>
<dbReference type="EMBL" id="CP001252">
    <property type="protein sequence ID" value="ACK44953.1"/>
    <property type="molecule type" value="Genomic_DNA"/>
</dbReference>
<dbReference type="RefSeq" id="WP_006079886.1">
    <property type="nucleotide sequence ID" value="NC_011663.1"/>
</dbReference>
<dbReference type="SMR" id="B8E4L2"/>
<dbReference type="GeneID" id="11770743"/>
<dbReference type="KEGG" id="sbp:Sbal223_0419"/>
<dbReference type="HOGENOM" id="CLU_038422_2_0_6"/>
<dbReference type="Proteomes" id="UP000002507">
    <property type="component" value="Chromosome"/>
</dbReference>
<dbReference type="GO" id="GO:0005737">
    <property type="term" value="C:cytoplasm"/>
    <property type="evidence" value="ECO:0007669"/>
    <property type="project" value="UniProtKB-SubCell"/>
</dbReference>
<dbReference type="GO" id="GO:0071424">
    <property type="term" value="F:rRNA (cytosine-N4-)-methyltransferase activity"/>
    <property type="evidence" value="ECO:0007669"/>
    <property type="project" value="UniProtKB-UniRule"/>
</dbReference>
<dbReference type="GO" id="GO:0070475">
    <property type="term" value="P:rRNA base methylation"/>
    <property type="evidence" value="ECO:0007669"/>
    <property type="project" value="UniProtKB-UniRule"/>
</dbReference>
<dbReference type="FunFam" id="1.10.150.170:FF:000001">
    <property type="entry name" value="Ribosomal RNA small subunit methyltransferase H"/>
    <property type="match status" value="1"/>
</dbReference>
<dbReference type="Gene3D" id="1.10.150.170">
    <property type="entry name" value="Putative methyltransferase TM0872, insert domain"/>
    <property type="match status" value="1"/>
</dbReference>
<dbReference type="Gene3D" id="3.40.50.150">
    <property type="entry name" value="Vaccinia Virus protein VP39"/>
    <property type="match status" value="1"/>
</dbReference>
<dbReference type="HAMAP" id="MF_01007">
    <property type="entry name" value="16SrRNA_methyltr_H"/>
    <property type="match status" value="1"/>
</dbReference>
<dbReference type="InterPro" id="IPR002903">
    <property type="entry name" value="RsmH"/>
</dbReference>
<dbReference type="InterPro" id="IPR023397">
    <property type="entry name" value="SAM-dep_MeTrfase_MraW_recog"/>
</dbReference>
<dbReference type="InterPro" id="IPR029063">
    <property type="entry name" value="SAM-dependent_MTases_sf"/>
</dbReference>
<dbReference type="NCBIfam" id="TIGR00006">
    <property type="entry name" value="16S rRNA (cytosine(1402)-N(4))-methyltransferase RsmH"/>
    <property type="match status" value="1"/>
</dbReference>
<dbReference type="PANTHER" id="PTHR11265:SF0">
    <property type="entry name" value="12S RRNA N4-METHYLCYTIDINE METHYLTRANSFERASE"/>
    <property type="match status" value="1"/>
</dbReference>
<dbReference type="PANTHER" id="PTHR11265">
    <property type="entry name" value="S-ADENOSYL-METHYLTRANSFERASE MRAW"/>
    <property type="match status" value="1"/>
</dbReference>
<dbReference type="Pfam" id="PF01795">
    <property type="entry name" value="Methyltransf_5"/>
    <property type="match status" value="1"/>
</dbReference>
<dbReference type="PIRSF" id="PIRSF004486">
    <property type="entry name" value="MraW"/>
    <property type="match status" value="1"/>
</dbReference>
<dbReference type="SUPFAM" id="SSF81799">
    <property type="entry name" value="Putative methyltransferase TM0872, insert domain"/>
    <property type="match status" value="1"/>
</dbReference>
<dbReference type="SUPFAM" id="SSF53335">
    <property type="entry name" value="S-adenosyl-L-methionine-dependent methyltransferases"/>
    <property type="match status" value="1"/>
</dbReference>